<protein>
    <recommendedName>
        <fullName>Serine/threonine-protein kinase NLK2</fullName>
        <ecNumber>2.7.11.24</ecNumber>
    </recommendedName>
    <alternativeName>
        <fullName>Nemo-like kinase 2</fullName>
        <shortName>Nlk.2</shortName>
        <shortName evidence="12 13 15">xNLK</shortName>
    </alternativeName>
</protein>
<evidence type="ECO:0000250" key="1">
    <source>
        <dbReference type="UniProtKB" id="O54949"/>
    </source>
</evidence>
<evidence type="ECO:0000250" key="2">
    <source>
        <dbReference type="UniProtKB" id="P53779"/>
    </source>
</evidence>
<evidence type="ECO:0000250" key="3">
    <source>
        <dbReference type="UniProtKB" id="Q63844"/>
    </source>
</evidence>
<evidence type="ECO:0000255" key="4"/>
<evidence type="ECO:0000255" key="5">
    <source>
        <dbReference type="PROSITE-ProRule" id="PRU00159"/>
    </source>
</evidence>
<evidence type="ECO:0000255" key="6">
    <source>
        <dbReference type="PROSITE-ProRule" id="PRU10027"/>
    </source>
</evidence>
<evidence type="ECO:0000269" key="7">
    <source>
    </source>
</evidence>
<evidence type="ECO:0000269" key="8">
    <source>
    </source>
</evidence>
<evidence type="ECO:0000269" key="9">
    <source>
    </source>
</evidence>
<evidence type="ECO:0000269" key="10">
    <source>
    </source>
</evidence>
<evidence type="ECO:0000269" key="11">
    <source>
    </source>
</evidence>
<evidence type="ECO:0000303" key="12">
    <source>
    </source>
</evidence>
<evidence type="ECO:0000303" key="13">
    <source>
    </source>
</evidence>
<evidence type="ECO:0000303" key="14">
    <source>
    </source>
</evidence>
<evidence type="ECO:0000303" key="15">
    <source>
    </source>
</evidence>
<evidence type="ECO:0000305" key="16"/>
<evidence type="ECO:0000312" key="17">
    <source>
        <dbReference type="EMBL" id="AAH77759.1"/>
    </source>
</evidence>
<evidence type="ECO:0000312" key="18">
    <source>
        <dbReference type="EMBL" id="BAB85870.1"/>
    </source>
</evidence>
<dbReference type="EC" id="2.7.11.24"/>
<dbReference type="EMBL" id="AB071285">
    <property type="protein sequence ID" value="BAB85870.1"/>
    <property type="molecule type" value="mRNA"/>
</dbReference>
<dbReference type="EMBL" id="BC077759">
    <property type="protein sequence ID" value="AAH77759.1"/>
    <property type="status" value="ALT_FRAME"/>
    <property type="molecule type" value="mRNA"/>
</dbReference>
<dbReference type="RefSeq" id="NP_001082214.1">
    <property type="nucleotide sequence ID" value="NM_001088745.1"/>
</dbReference>
<dbReference type="SMR" id="Q8QGV6"/>
<dbReference type="BioGRID" id="99628">
    <property type="interactions" value="1"/>
</dbReference>
<dbReference type="DNASU" id="398295"/>
<dbReference type="GeneID" id="398295"/>
<dbReference type="KEGG" id="xla:398295"/>
<dbReference type="AGR" id="Xenbase:XB-GENE-1218927"/>
<dbReference type="CTD" id="398295"/>
<dbReference type="Xenbase" id="XB-GENE-1218927">
    <property type="gene designation" value="nlk.2.S"/>
</dbReference>
<dbReference type="OrthoDB" id="192887at2759"/>
<dbReference type="Proteomes" id="UP000186698">
    <property type="component" value="Chromosome 9_10S"/>
</dbReference>
<dbReference type="Bgee" id="398295">
    <property type="expression patterns" value="Expressed in blastula and 19 other cell types or tissues"/>
</dbReference>
<dbReference type="GO" id="GO:0005737">
    <property type="term" value="C:cytoplasm"/>
    <property type="evidence" value="ECO:0000318"/>
    <property type="project" value="GO_Central"/>
</dbReference>
<dbReference type="GO" id="GO:0005634">
    <property type="term" value="C:nucleus"/>
    <property type="evidence" value="ECO:0000250"/>
    <property type="project" value="UniProtKB"/>
</dbReference>
<dbReference type="GO" id="GO:0005524">
    <property type="term" value="F:ATP binding"/>
    <property type="evidence" value="ECO:0000250"/>
    <property type="project" value="UniProtKB"/>
</dbReference>
<dbReference type="GO" id="GO:0140297">
    <property type="term" value="F:DNA-binding transcription factor binding"/>
    <property type="evidence" value="ECO:0000353"/>
    <property type="project" value="UniProtKB"/>
</dbReference>
<dbReference type="GO" id="GO:0000287">
    <property type="term" value="F:magnesium ion binding"/>
    <property type="evidence" value="ECO:0000250"/>
    <property type="project" value="UniProtKB"/>
</dbReference>
<dbReference type="GO" id="GO:0004707">
    <property type="term" value="F:MAP kinase activity"/>
    <property type="evidence" value="ECO:0007669"/>
    <property type="project" value="UniProtKB-EC"/>
</dbReference>
<dbReference type="GO" id="GO:0106310">
    <property type="term" value="F:protein serine kinase activity"/>
    <property type="evidence" value="ECO:0007669"/>
    <property type="project" value="RHEA"/>
</dbReference>
<dbReference type="GO" id="GO:0004674">
    <property type="term" value="F:protein serine/threonine kinase activity"/>
    <property type="evidence" value="ECO:0000314"/>
    <property type="project" value="UniProtKB"/>
</dbReference>
<dbReference type="GO" id="GO:0031625">
    <property type="term" value="F:ubiquitin protein ligase binding"/>
    <property type="evidence" value="ECO:0000353"/>
    <property type="project" value="UniProtKB"/>
</dbReference>
<dbReference type="GO" id="GO:0009952">
    <property type="term" value="P:anterior/posterior pattern specification"/>
    <property type="evidence" value="ECO:0000315"/>
    <property type="project" value="UniProtKB"/>
</dbReference>
<dbReference type="GO" id="GO:0035556">
    <property type="term" value="P:intracellular signal transduction"/>
    <property type="evidence" value="ECO:0000318"/>
    <property type="project" value="GO_Central"/>
</dbReference>
<dbReference type="GO" id="GO:0001707">
    <property type="term" value="P:mesoderm formation"/>
    <property type="evidence" value="ECO:0000315"/>
    <property type="project" value="UniProtKB"/>
</dbReference>
<dbReference type="GO" id="GO:0007399">
    <property type="term" value="P:nervous system development"/>
    <property type="evidence" value="ECO:0000316"/>
    <property type="project" value="UniProtKB"/>
</dbReference>
<dbReference type="GO" id="GO:0018105">
    <property type="term" value="P:peptidyl-serine phosphorylation"/>
    <property type="evidence" value="ECO:0000314"/>
    <property type="project" value="UniProtKB"/>
</dbReference>
<dbReference type="GO" id="GO:0018107">
    <property type="term" value="P:peptidyl-threonine phosphorylation"/>
    <property type="evidence" value="ECO:0000314"/>
    <property type="project" value="UniProtKB"/>
</dbReference>
<dbReference type="GO" id="GO:0031398">
    <property type="term" value="P:positive regulation of protein ubiquitination"/>
    <property type="evidence" value="ECO:0000353"/>
    <property type="project" value="UniProtKB"/>
</dbReference>
<dbReference type="GO" id="GO:1904894">
    <property type="term" value="P:positive regulation of receptor signaling pathway via STAT"/>
    <property type="evidence" value="ECO:0000315"/>
    <property type="project" value="UniProtKB"/>
</dbReference>
<dbReference type="GO" id="GO:0007179">
    <property type="term" value="P:transforming growth factor beta receptor signaling pathway"/>
    <property type="evidence" value="ECO:0000315"/>
    <property type="project" value="UniProtKB"/>
</dbReference>
<dbReference type="GO" id="GO:0016055">
    <property type="term" value="P:Wnt signaling pathway"/>
    <property type="evidence" value="ECO:0007669"/>
    <property type="project" value="UniProtKB-KW"/>
</dbReference>
<dbReference type="CDD" id="cd07853">
    <property type="entry name" value="STKc_NLK"/>
    <property type="match status" value="1"/>
</dbReference>
<dbReference type="FunFam" id="1.10.510.10:FF:000162">
    <property type="entry name" value="Mitogen-activated protein kinase"/>
    <property type="match status" value="1"/>
</dbReference>
<dbReference type="FunFam" id="3.30.200.20:FF:000164">
    <property type="entry name" value="Mitogen-activated protein kinase"/>
    <property type="match status" value="1"/>
</dbReference>
<dbReference type="Gene3D" id="3.30.200.20">
    <property type="entry name" value="Phosphorylase Kinase, domain 1"/>
    <property type="match status" value="1"/>
</dbReference>
<dbReference type="Gene3D" id="1.10.510.10">
    <property type="entry name" value="Transferase(Phosphotransferase) domain 1"/>
    <property type="match status" value="1"/>
</dbReference>
<dbReference type="InterPro" id="IPR011009">
    <property type="entry name" value="Kinase-like_dom_sf"/>
</dbReference>
<dbReference type="InterPro" id="IPR050117">
    <property type="entry name" value="MAP_kinase"/>
</dbReference>
<dbReference type="InterPro" id="IPR003527">
    <property type="entry name" value="MAP_kinase_CS"/>
</dbReference>
<dbReference type="InterPro" id="IPR000719">
    <property type="entry name" value="Prot_kinase_dom"/>
</dbReference>
<dbReference type="InterPro" id="IPR017441">
    <property type="entry name" value="Protein_kinase_ATP_BS"/>
</dbReference>
<dbReference type="InterPro" id="IPR008271">
    <property type="entry name" value="Ser/Thr_kinase_AS"/>
</dbReference>
<dbReference type="PANTHER" id="PTHR24055">
    <property type="entry name" value="MITOGEN-ACTIVATED PROTEIN KINASE"/>
    <property type="match status" value="1"/>
</dbReference>
<dbReference type="Pfam" id="PF00069">
    <property type="entry name" value="Pkinase"/>
    <property type="match status" value="1"/>
</dbReference>
<dbReference type="SMART" id="SM00220">
    <property type="entry name" value="S_TKc"/>
    <property type="match status" value="1"/>
</dbReference>
<dbReference type="SUPFAM" id="SSF56112">
    <property type="entry name" value="Protein kinase-like (PK-like)"/>
    <property type="match status" value="1"/>
</dbReference>
<dbReference type="PROSITE" id="PS01351">
    <property type="entry name" value="MAPK"/>
    <property type="match status" value="1"/>
</dbReference>
<dbReference type="PROSITE" id="PS00107">
    <property type="entry name" value="PROTEIN_KINASE_ATP"/>
    <property type="match status" value="1"/>
</dbReference>
<dbReference type="PROSITE" id="PS50011">
    <property type="entry name" value="PROTEIN_KINASE_DOM"/>
    <property type="match status" value="1"/>
</dbReference>
<dbReference type="PROSITE" id="PS00108">
    <property type="entry name" value="PROTEIN_KINASE_ST"/>
    <property type="match status" value="1"/>
</dbReference>
<name>NLK2_XENLA</name>
<proteinExistence type="evidence at protein level"/>
<comment type="function">
    <text evidence="7 9 10 11">Negatively regulates Wnt/beta-catenin-signaling during development. Plays a role together with sox11 in neural induction during early embryogenesis. Involved in TGFbeta-mediated mesoderm induction in early embryos, acting downstream of map3k7/tak1 to phosphorylate stat3.1. Augments the rnf138/narf-directed ubiquitination and degradation of tcf/lef by enhancing the association of rnf138/narf and tcf/lef. Phosphorylates mef2a to play a role in anterior neural development, including eye formation.</text>
</comment>
<comment type="catalytic activity">
    <reaction evidence="11">
        <text>L-seryl-[protein] + ATP = O-phospho-L-seryl-[protein] + ADP + H(+)</text>
        <dbReference type="Rhea" id="RHEA:17989"/>
        <dbReference type="Rhea" id="RHEA-COMP:9863"/>
        <dbReference type="Rhea" id="RHEA-COMP:11604"/>
        <dbReference type="ChEBI" id="CHEBI:15378"/>
        <dbReference type="ChEBI" id="CHEBI:29999"/>
        <dbReference type="ChEBI" id="CHEBI:30616"/>
        <dbReference type="ChEBI" id="CHEBI:83421"/>
        <dbReference type="ChEBI" id="CHEBI:456216"/>
        <dbReference type="EC" id="2.7.11.24"/>
    </reaction>
</comment>
<comment type="catalytic activity">
    <reaction evidence="11">
        <text>L-threonyl-[protein] + ATP = O-phospho-L-threonyl-[protein] + ADP + H(+)</text>
        <dbReference type="Rhea" id="RHEA:46608"/>
        <dbReference type="Rhea" id="RHEA-COMP:11060"/>
        <dbReference type="Rhea" id="RHEA-COMP:11605"/>
        <dbReference type="ChEBI" id="CHEBI:15378"/>
        <dbReference type="ChEBI" id="CHEBI:30013"/>
        <dbReference type="ChEBI" id="CHEBI:30616"/>
        <dbReference type="ChEBI" id="CHEBI:61977"/>
        <dbReference type="ChEBI" id="CHEBI:456216"/>
        <dbReference type="EC" id="2.7.11.24"/>
    </reaction>
</comment>
<comment type="cofactor">
    <cofactor evidence="1">
        <name>Mg(2+)</name>
        <dbReference type="ChEBI" id="CHEBI:18420"/>
    </cofactor>
</comment>
<comment type="activity regulation">
    <text evidence="3">Activated by tyrosine and threonine phosphorylation.</text>
</comment>
<comment type="subunit">
    <text evidence="7 8 9 10 11">Interacts with sox11, hmgxb4/hmg2l1, rnf138/narf, stat3.1 and mef2a.</text>
</comment>
<comment type="subcellular location">
    <subcellularLocation>
        <location evidence="1">Nucleus</location>
    </subcellularLocation>
    <subcellularLocation>
        <location evidence="1">Cytoplasm</location>
    </subcellularLocation>
</comment>
<comment type="tissue specificity">
    <text evidence="7 11">Expressed widely in the ectoderm during early gastrula stage when neural induction is taking place. Expressed in the head region of neurula stage embryos. At the end of neurulation, expression becomes localized to the nervous system, and is restricted to the central nervous system, eye and head neural crest cells by the early tadpole stages.</text>
</comment>
<comment type="developmental stage">
    <text evidence="7">Expressed maternally and throughout embryonic development through to the tadpole stage.</text>
</comment>
<comment type="similarity">
    <text evidence="4">Belongs to the protein kinase superfamily. CMGC Ser/Thr protein kinase family. MAP kinase subfamily.</text>
</comment>
<comment type="sequence caution" evidence="16">
    <conflict type="frameshift">
        <sequence resource="EMBL-CDS" id="AAH77759"/>
    </conflict>
</comment>
<organism>
    <name type="scientific">Xenopus laevis</name>
    <name type="common">African clawed frog</name>
    <dbReference type="NCBI Taxonomy" id="8355"/>
    <lineage>
        <taxon>Eukaryota</taxon>
        <taxon>Metazoa</taxon>
        <taxon>Chordata</taxon>
        <taxon>Craniata</taxon>
        <taxon>Vertebrata</taxon>
        <taxon>Euteleostomi</taxon>
        <taxon>Amphibia</taxon>
        <taxon>Batrachia</taxon>
        <taxon>Anura</taxon>
        <taxon>Pipoidea</taxon>
        <taxon>Pipidae</taxon>
        <taxon>Xenopodinae</taxon>
        <taxon>Xenopus</taxon>
        <taxon>Xenopus</taxon>
    </lineage>
</organism>
<gene>
    <name type="primary">nlk.2</name>
    <name evidence="12 13 14 15" type="synonym">nlk</name>
</gene>
<accession>Q8QGV6</accession>
<accession>Q6DD67</accession>
<reference evidence="16 18" key="1">
    <citation type="journal article" date="2002" name="Genes Cells">
        <title>Involvement of NLK and Sox11 in neural induction in Xenopus development.</title>
        <authorList>
            <person name="Hyodo-Miura J."/>
            <person name="Urushiyama S."/>
            <person name="Nagai S."/>
            <person name="Nishita M."/>
            <person name="Ueno N."/>
            <person name="Shibuya H."/>
        </authorList>
    </citation>
    <scope>NUCLEOTIDE SEQUENCE [MRNA]</scope>
    <scope>FUNCTION</scope>
    <scope>INTERACTION WITH SOX11</scope>
    <scope>TISSUE SPECIFICITY</scope>
    <scope>DEVELOPMENTAL STAGE</scope>
    <source>
        <tissue evidence="7">Oocyte</tissue>
    </source>
</reference>
<reference evidence="17" key="2">
    <citation type="submission" date="2004-07" db="EMBL/GenBank/DDBJ databases">
        <authorList>
            <consortium name="NIH - Xenopus Gene Collection (XGC) project"/>
        </authorList>
    </citation>
    <scope>NUCLEOTIDE SEQUENCE [LARGE SCALE MRNA]</scope>
    <source>
        <tissue evidence="17">Embryo</tissue>
    </source>
</reference>
<reference evidence="16" key="3">
    <citation type="journal article" date="2003" name="Genes Cells">
        <title>Negative regulation of Wnt signalling by HMG2L1, a novel NLK-binding protein.</title>
        <authorList>
            <person name="Yamada M."/>
            <person name="Ohkawara B."/>
            <person name="Ichimura N."/>
            <person name="Hyodo-Miura J."/>
            <person name="Urushiyama S."/>
            <person name="Shirakabe K."/>
            <person name="Shibuya H."/>
        </authorList>
    </citation>
    <scope>INTERACTION WITH HMGXB4</scope>
</reference>
<reference evidence="16" key="4">
    <citation type="journal article" date="2004" name="Genes Dev.">
        <title>Role of the TAK1-NLK-STAT3 pathway in TGF-beta-mediated mesoderm induction.</title>
        <authorList>
            <person name="Ohkawara B."/>
            <person name="Shirakabe K."/>
            <person name="Hyodo-Miura J."/>
            <person name="Matsuo R."/>
            <person name="Ueno N."/>
            <person name="Matsumoto K."/>
            <person name="Shibuya H."/>
        </authorList>
    </citation>
    <scope>FUNCTION</scope>
    <scope>INTERACTION WITH STAT3.1</scope>
</reference>
<reference evidence="16" key="5">
    <citation type="journal article" date="2006" name="J. Biol. Chem.">
        <title>NARF, an nemo-like kinase (NLK)-associated ring finger protein regulates the ubiquitylation and degradation of T cell factor/lymphoid enhancer factor (TCF/LEF).</title>
        <authorList>
            <person name="Yamada M."/>
            <person name="Ohnishi J."/>
            <person name="Ohkawara B."/>
            <person name="Iemura S."/>
            <person name="Satoh K."/>
            <person name="Hyodo-Miura J."/>
            <person name="Kawachi K."/>
            <person name="Natsume T."/>
            <person name="Shibuya H."/>
        </authorList>
    </citation>
    <scope>FUNCTION</scope>
    <scope>INTERACTION WITH RNF138</scope>
    <scope>MUTAGENESIS OF LYS-89</scope>
</reference>
<reference evidence="16" key="6">
    <citation type="journal article" date="2007" name="Mol. Cell. Biol.">
        <title>Nemo-like kinase-myocyte enhancer factor 2A signaling regulates anterior formation in Xenopus development.</title>
        <authorList>
            <person name="Satoh K."/>
            <person name="Ohnishi J."/>
            <person name="Sato A."/>
            <person name="Takeyama M."/>
            <person name="Iemura S."/>
            <person name="Natsume T."/>
            <person name="Shibuya H."/>
        </authorList>
    </citation>
    <scope>FUNCTION</scope>
    <scope>CATALYTIC ACTIVITY</scope>
    <scope>INTERACTION WITH MEF2A</scope>
    <scope>TISSUE SPECIFICITY</scope>
</reference>
<keyword id="KW-0067">ATP-binding</keyword>
<keyword id="KW-0963">Cytoplasm</keyword>
<keyword id="KW-0217">Developmental protein</keyword>
<keyword id="KW-0418">Kinase</keyword>
<keyword id="KW-0460">Magnesium</keyword>
<keyword id="KW-0479">Metal-binding</keyword>
<keyword id="KW-0547">Nucleotide-binding</keyword>
<keyword id="KW-0539">Nucleus</keyword>
<keyword id="KW-0597">Phosphoprotein</keyword>
<keyword id="KW-1185">Reference proteome</keyword>
<keyword id="KW-0723">Serine/threonine-protein kinase</keyword>
<keyword id="KW-0804">Transcription</keyword>
<keyword id="KW-0805">Transcription regulation</keyword>
<keyword id="KW-0808">Transferase</keyword>
<keyword id="KW-0833">Ubl conjugation pathway</keyword>
<keyword id="KW-0879">Wnt signaling pathway</keyword>
<sequence length="447" mass="50138">MAFPGSGRSIPGQLCAGVFSGLIQPPLGQKFYCPNGGGAVPSPLPQALSAPQCNGEGRDPEPDRPIGYGAFGVVWSVTDPRDGKRVALKKMPNVFQNLVSCKRVFRELKMLCFFKHDNVLSALDILQPPQIDCFEEIYVITELMQTDLHKVIVSPQPLSSDHIKVFLYQILRGLKYLHSAGILHRDIKPGNLLVNSNCVLKICDFGLARVEELDESQHMTQEVVTQYYRAPEILMGSRHYRSAIDIWSVGCIFAELLGRRILFQAQSPIQQLDLITDLLGTPPLTAMRSACEGARAHILRGPHKPPSLSVLYMLSGEATHEAVHLLCRMLLFDPLKRISAKDALAHPYLEEGRLRYHTCMCHCCYSVSSGRVYTADFEPTATNRFDDSYEKSLTSVWQVKELVHRFITDQHQGKRPPLCINPHSAAFKTFIRSTAWHSSKVSKKEER</sequence>
<feature type="chain" id="PRO_0000370235" description="Serine/threonine-protein kinase NLK2">
    <location>
        <begin position="1"/>
        <end position="447"/>
    </location>
</feature>
<feature type="domain" description="Protein kinase" evidence="5">
    <location>
        <begin position="60"/>
        <end position="349"/>
    </location>
</feature>
<feature type="active site" description="Proton acceptor" evidence="2 5 6">
    <location>
        <position position="186"/>
    </location>
</feature>
<feature type="binding site" evidence="2 5">
    <location>
        <begin position="66"/>
        <end position="74"/>
    </location>
    <ligand>
        <name>ATP</name>
        <dbReference type="ChEBI" id="CHEBI:30616"/>
    </ligand>
</feature>
<feature type="binding site" evidence="16">
    <location>
        <position position="89"/>
    </location>
    <ligand>
        <name>ATP</name>
        <dbReference type="ChEBI" id="CHEBI:30616"/>
    </ligand>
</feature>
<feature type="mutagenesis site" description="Kinase inactive. Does not enhance rnf138/narf-mediated ubiquitination or association of rnf138/narf and tcf/lef." evidence="10">
    <original>K</original>
    <variation>R</variation>
    <location>
        <position position="89"/>
    </location>
</feature>
<feature type="sequence conflict" description="In Ref. 2; AAH77759." evidence="16" ref="2">
    <original>S</original>
    <variation>G</variation>
    <location>
        <position position="20"/>
    </location>
</feature>